<protein>
    <recommendedName>
        <fullName evidence="5">Methyltransferase tpcH</fullName>
        <ecNumber evidence="9">2.1.1.-</ecNumber>
    </recommendedName>
    <alternativeName>
        <fullName evidence="5">Trypacidin synthesis protein H</fullName>
    </alternativeName>
</protein>
<evidence type="ECO:0000250" key="1">
    <source>
        <dbReference type="UniProtKB" id="Q0CCX8"/>
    </source>
</evidence>
<evidence type="ECO:0000269" key="2">
    <source>
    </source>
</evidence>
<evidence type="ECO:0000269" key="3">
    <source>
    </source>
</evidence>
<evidence type="ECO:0000269" key="4">
    <source>
    </source>
</evidence>
<evidence type="ECO:0000303" key="5">
    <source>
    </source>
</evidence>
<evidence type="ECO:0000303" key="6">
    <source>
    </source>
</evidence>
<evidence type="ECO:0000305" key="7"/>
<evidence type="ECO:0000305" key="8">
    <source>
    </source>
</evidence>
<evidence type="ECO:0000305" key="9">
    <source>
    </source>
</evidence>
<dbReference type="EC" id="2.1.1.-" evidence="9"/>
<dbReference type="EMBL" id="AAHF01000005">
    <property type="protein sequence ID" value="EAL89344.2"/>
    <property type="molecule type" value="Genomic_DNA"/>
</dbReference>
<dbReference type="RefSeq" id="XP_751382.2">
    <property type="nucleotide sequence ID" value="XM_746289.2"/>
</dbReference>
<dbReference type="SMR" id="Q4WQZ0"/>
<dbReference type="STRING" id="330879.Q4WQZ0"/>
<dbReference type="EnsemblFungi" id="EAL89344">
    <property type="protein sequence ID" value="EAL89344"/>
    <property type="gene ID" value="AFUA_4G14510"/>
</dbReference>
<dbReference type="GeneID" id="3509606"/>
<dbReference type="KEGG" id="afm:AFUA_4G14510"/>
<dbReference type="VEuPathDB" id="FungiDB:Afu4g14510"/>
<dbReference type="eggNOG" id="ENOG502S4V1">
    <property type="taxonomic scope" value="Eukaryota"/>
</dbReference>
<dbReference type="HOGENOM" id="CLU_065416_0_0_1"/>
<dbReference type="InParanoid" id="Q4WQZ0"/>
<dbReference type="OMA" id="TLAFTTW"/>
<dbReference type="OrthoDB" id="2013972at2759"/>
<dbReference type="Proteomes" id="UP000002530">
    <property type="component" value="Chromosome 4"/>
</dbReference>
<dbReference type="GO" id="GO:0008168">
    <property type="term" value="F:methyltransferase activity"/>
    <property type="evidence" value="ECO:0000318"/>
    <property type="project" value="GO_Central"/>
</dbReference>
<dbReference type="GO" id="GO:0032259">
    <property type="term" value="P:methylation"/>
    <property type="evidence" value="ECO:0007669"/>
    <property type="project" value="UniProtKB-KW"/>
</dbReference>
<dbReference type="GO" id="GO:0044550">
    <property type="term" value="P:secondary metabolite biosynthetic process"/>
    <property type="evidence" value="ECO:0000317"/>
    <property type="project" value="AspGD"/>
</dbReference>
<dbReference type="CDD" id="cd02440">
    <property type="entry name" value="AdoMet_MTases"/>
    <property type="match status" value="1"/>
</dbReference>
<dbReference type="FunFam" id="3.40.50.150:FF:000680">
    <property type="entry name" value="Ubiquinone/menaquinone biosynthesis methyltransferase ubiE"/>
    <property type="match status" value="1"/>
</dbReference>
<dbReference type="Gene3D" id="3.40.50.150">
    <property type="entry name" value="Vaccinia Virus protein VP39"/>
    <property type="match status" value="1"/>
</dbReference>
<dbReference type="InterPro" id="IPR041698">
    <property type="entry name" value="Methyltransf_25"/>
</dbReference>
<dbReference type="InterPro" id="IPR029063">
    <property type="entry name" value="SAM-dependent_MTases_sf"/>
</dbReference>
<dbReference type="PANTHER" id="PTHR43591">
    <property type="entry name" value="METHYLTRANSFERASE"/>
    <property type="match status" value="1"/>
</dbReference>
<dbReference type="Pfam" id="PF13649">
    <property type="entry name" value="Methyltransf_25"/>
    <property type="match status" value="1"/>
</dbReference>
<dbReference type="SUPFAM" id="SSF53335">
    <property type="entry name" value="S-adenosyl-L-methionine-dependent methyltransferases"/>
    <property type="match status" value="1"/>
</dbReference>
<sequence length="282" mass="31896">MLEKVFHEKSFADQYTYGAKISELYAETLITESGIAKSHQRPLIILDNACGTGSISSTLQRTLDERNKRSLKLTCGDLSEGMVDYTKQRMQAEGWNNAEAKIVNAQDTGLPSDHYTHVYTAFAFNMFPDYKAALRECLRILQPGGTLATSTWKTANWCTIMKPVIATMPGQLSYPTMDEINTMLNKGWDRESDVRAEFEQAGFDHVNITTVEKQCLLPVQEFGEACKILLPYILSKFWTQEQRDQYEADVPSYLMRYLEREYGKDGLAPMKGVAIIASGRKP</sequence>
<keyword id="KW-0489">Methyltransferase</keyword>
<keyword id="KW-1185">Reference proteome</keyword>
<keyword id="KW-0949">S-adenosyl-L-methionine</keyword>
<keyword id="KW-0808">Transferase</keyword>
<feature type="chain" id="PRO_0000437104" description="Methyltransferase tpcH">
    <location>
        <begin position="1"/>
        <end position="282"/>
    </location>
</feature>
<name>TPCH_ASPFU</name>
<comment type="function">
    <text evidence="1 2 3 4">Methyltransferase; part of the gene cluster that mediates the biosynthesis of trypacidin, a mycotoxin with antiprotozoal activity and that plays a role in the infection process (PubMed:26242966, PubMed:26278536). The pathway begins with the synthesis of atrochrysone thioester by the polyketide synthase (PKS) tpcC (PubMed:26242966). The atrochrysone carboxyl ACP thioesterase tpcB then breaks the thioester bond and releases the atrochrysone carboxylic acid from tpcC (PubMed:26242966). The decarboxylase tpcK converts atrochrysone carboxylic acid to atrochrysone which is further reduced into emodin anthrone (PubMed:26242966). The next step is performed by the emodin anthrone oxygenase tpcL that catalyzes the oxidation of emodinanthrone to emodin (PubMed:26242966). Emodin O-methyltransferase encoded by tpcA catalyzes methylation of the 8-hydroxy group of emodin to form questin (PubMed:26242966). Ring cleavage of questin by questin oxidase tpcI leads to desmethylsulochrin via several intermediates including questin epoxide (By similarity). Another methylation step catalyzed by tpcM leads to the formation of sulochrin which is further converted to monomethylsulfochrin by tpcH. Finally, the tpcJ catalyzes the conversion of monomethylsulfochrin to trypacidin (PubMed:26242966). Trypacidin is toxic for human pulmonary and bronchial epithelial cells by initiating the intracellular formation of nitric oxide (NO) and hydrogen peroxide (H(2)O(2)), thus triggering host necrotic cell death (PubMed:22319557). The trypacidin pathway is also able to produce endocrocin via a distinct route from the endocrocin Enc pathway (PubMed:26242966).</text>
</comment>
<comment type="pathway">
    <text evidence="9">Secondary metabolite biosynthesis.</text>
</comment>
<comment type="tissue specificity">
    <text evidence="8">Specifically expressed in conidia (PubMed:22319557).</text>
</comment>
<comment type="induction">
    <text evidence="3">Expression is positively regulated by the transcription factors brlA and laeA (PubMed:26242966).</text>
</comment>
<comment type="similarity">
    <text evidence="7">Belongs to the class I-like SAM-binding methyltransferase superfamily.</text>
</comment>
<gene>
    <name evidence="5" type="primary">tpcH</name>
    <name evidence="6" type="synonym">tynH</name>
    <name type="ORF">AFUA_4G14510</name>
</gene>
<accession>Q4WQZ0</accession>
<proteinExistence type="evidence at transcript level"/>
<organism>
    <name type="scientific">Aspergillus fumigatus (strain ATCC MYA-4609 / CBS 101355 / FGSC A1100 / Af293)</name>
    <name type="common">Neosartorya fumigata</name>
    <dbReference type="NCBI Taxonomy" id="330879"/>
    <lineage>
        <taxon>Eukaryota</taxon>
        <taxon>Fungi</taxon>
        <taxon>Dikarya</taxon>
        <taxon>Ascomycota</taxon>
        <taxon>Pezizomycotina</taxon>
        <taxon>Eurotiomycetes</taxon>
        <taxon>Eurotiomycetidae</taxon>
        <taxon>Eurotiales</taxon>
        <taxon>Aspergillaceae</taxon>
        <taxon>Aspergillus</taxon>
        <taxon>Aspergillus subgen. Fumigati</taxon>
    </lineage>
</organism>
<reference key="1">
    <citation type="journal article" date="2005" name="Nature">
        <title>Genomic sequence of the pathogenic and allergenic filamentous fungus Aspergillus fumigatus.</title>
        <authorList>
            <person name="Nierman W.C."/>
            <person name="Pain A."/>
            <person name="Anderson M.J."/>
            <person name="Wortman J.R."/>
            <person name="Kim H.S."/>
            <person name="Arroyo J."/>
            <person name="Berriman M."/>
            <person name="Abe K."/>
            <person name="Archer D.B."/>
            <person name="Bermejo C."/>
            <person name="Bennett J.W."/>
            <person name="Bowyer P."/>
            <person name="Chen D."/>
            <person name="Collins M."/>
            <person name="Coulsen R."/>
            <person name="Davies R."/>
            <person name="Dyer P.S."/>
            <person name="Farman M.L."/>
            <person name="Fedorova N."/>
            <person name="Fedorova N.D."/>
            <person name="Feldblyum T.V."/>
            <person name="Fischer R."/>
            <person name="Fosker N."/>
            <person name="Fraser A."/>
            <person name="Garcia J.L."/>
            <person name="Garcia M.J."/>
            <person name="Goble A."/>
            <person name="Goldman G.H."/>
            <person name="Gomi K."/>
            <person name="Griffith-Jones S."/>
            <person name="Gwilliam R."/>
            <person name="Haas B.J."/>
            <person name="Haas H."/>
            <person name="Harris D.E."/>
            <person name="Horiuchi H."/>
            <person name="Huang J."/>
            <person name="Humphray S."/>
            <person name="Jimenez J."/>
            <person name="Keller N."/>
            <person name="Khouri H."/>
            <person name="Kitamoto K."/>
            <person name="Kobayashi T."/>
            <person name="Konzack S."/>
            <person name="Kulkarni R."/>
            <person name="Kumagai T."/>
            <person name="Lafton A."/>
            <person name="Latge J.-P."/>
            <person name="Li W."/>
            <person name="Lord A."/>
            <person name="Lu C."/>
            <person name="Majoros W.H."/>
            <person name="May G.S."/>
            <person name="Miller B.L."/>
            <person name="Mohamoud Y."/>
            <person name="Molina M."/>
            <person name="Monod M."/>
            <person name="Mouyna I."/>
            <person name="Mulligan S."/>
            <person name="Murphy L.D."/>
            <person name="O'Neil S."/>
            <person name="Paulsen I."/>
            <person name="Penalva M.A."/>
            <person name="Pertea M."/>
            <person name="Price C."/>
            <person name="Pritchard B.L."/>
            <person name="Quail M.A."/>
            <person name="Rabbinowitsch E."/>
            <person name="Rawlins N."/>
            <person name="Rajandream M.A."/>
            <person name="Reichard U."/>
            <person name="Renauld H."/>
            <person name="Robson G.D."/>
            <person name="Rodriguez de Cordoba S."/>
            <person name="Rodriguez-Pena J.M."/>
            <person name="Ronning C.M."/>
            <person name="Rutter S."/>
            <person name="Salzberg S.L."/>
            <person name="Sanchez M."/>
            <person name="Sanchez-Ferrero J.C."/>
            <person name="Saunders D."/>
            <person name="Seeger K."/>
            <person name="Squares R."/>
            <person name="Squares S."/>
            <person name="Takeuchi M."/>
            <person name="Tekaia F."/>
            <person name="Turner G."/>
            <person name="Vazquez de Aldana C.R."/>
            <person name="Weidman J."/>
            <person name="White O."/>
            <person name="Woodward J.R."/>
            <person name="Yu J.-H."/>
            <person name="Fraser C.M."/>
            <person name="Galagan J.E."/>
            <person name="Asai K."/>
            <person name="Machida M."/>
            <person name="Hall N."/>
            <person name="Barrell B.G."/>
            <person name="Denning D.W."/>
        </authorList>
    </citation>
    <scope>NUCLEOTIDE SEQUENCE [LARGE SCALE GENOMIC DNA]</scope>
    <source>
        <strain>ATCC MYA-4609 / CBS 101355 / FGSC A1100 / Af293</strain>
    </source>
</reference>
<reference key="2">
    <citation type="journal article" date="2012" name="PLoS ONE">
        <title>Trypacidin, a spore-borne toxin from Aspergillus fumigatus, is cytotoxic to lung cells.</title>
        <authorList>
            <person name="Gauthier T."/>
            <person name="Wang X."/>
            <person name="Sifuentes Dos Santos J."/>
            <person name="Fysikopoulos A."/>
            <person name="Tadrist S."/>
            <person name="Canlet C."/>
            <person name="Artigot M.P."/>
            <person name="Loiseau N."/>
            <person name="Oswald I.P."/>
            <person name="Puel O."/>
        </authorList>
    </citation>
    <scope>FUNCTION</scope>
    <scope>TISSUE SPECIFICITY</scope>
</reference>
<reference key="3">
    <citation type="journal article" date="2015" name="Appl. Microbiol. Biotechnol.">
        <title>Identification of the antiphagocytic trypacidin gene cluster in the human-pathogenic fungus Aspergillus fumigatus.</title>
        <authorList>
            <person name="Mattern D.J."/>
            <person name="Schoeler H."/>
            <person name="Weber J."/>
            <person name="Novohradska S."/>
            <person name="Kraibooj K."/>
            <person name="Dahse H.M."/>
            <person name="Hillmann F."/>
            <person name="Valiante V."/>
            <person name="Figge M.T."/>
            <person name="Brakhage A.A."/>
        </authorList>
    </citation>
    <scope>FUNCTION</scope>
</reference>
<reference key="4">
    <citation type="journal article" date="2016" name="Environ. Microbiol.">
        <title>Redundant synthesis of a conidial polyketide by two distinct secondary metabolite clusters in Aspergillus fumigatus.</title>
        <authorList>
            <person name="Throckmorton K."/>
            <person name="Lim F.Y."/>
            <person name="Kontoyiannis D.P."/>
            <person name="Zheng W."/>
            <person name="Keller N.P."/>
        </authorList>
    </citation>
    <scope>FUNCTION</scope>
    <scope>INDUCTION</scope>
</reference>